<name>UVRB_IDILO</name>
<feature type="chain" id="PRO_0000227320" description="UvrABC system protein B">
    <location>
        <begin position="1"/>
        <end position="677"/>
    </location>
</feature>
<feature type="domain" description="Helicase ATP-binding" evidence="1">
    <location>
        <begin position="26"/>
        <end position="414"/>
    </location>
</feature>
<feature type="domain" description="Helicase C-terminal" evidence="1">
    <location>
        <begin position="432"/>
        <end position="598"/>
    </location>
</feature>
<feature type="domain" description="UVR" evidence="1">
    <location>
        <begin position="637"/>
        <end position="672"/>
    </location>
</feature>
<feature type="short sequence motif" description="Beta-hairpin">
    <location>
        <begin position="92"/>
        <end position="115"/>
    </location>
</feature>
<feature type="binding site" evidence="1">
    <location>
        <begin position="39"/>
        <end position="46"/>
    </location>
    <ligand>
        <name>ATP</name>
        <dbReference type="ChEBI" id="CHEBI:30616"/>
    </ligand>
</feature>
<sequence>MAKKFELVSKYKPAGDQPKAIESLLDNLDAGLAHQVLLGVTGSGKTFTMANVIERSQRPTLILAHNKTLAAQLYGEMKEYFPNNAVEYFVSYYDYYQPEAYVPTTDTFIEKDASINDHIEQMRLSATKALMERRDVVLVASVSAIYGLGDPESYMKMMLHLRRGDIIDQRDVLRRLAQLQYKRNDAAFERGTYRVRGDVIDIFPAESEEIAVRLELFDSEVDRISFFEPLTGQITEKDVARATIYPKTHYVTPREVLVKAIEKIKDELKDRRDILLKQNKLIEEQRINQRTQFDIEMMLELGYCSGIENYSRYLSGRAPGEPPPTLMDYLPDNALLIIDESHVTVSQIGAMYKGDRSRKENLVEYGFRLPSALDNRPLKFDEFEAIAPQTLYVSATPGKYELERSGNEVVEQVVRPTGLIDPQIEVRPVATQVDDLMSEIRLRTEVGERVLATTLTKKMSEDLADYLDEHGIKVRYLHSDIDTVERMEIIRDLRLGKFDVLVGINLLREGLDMPEVSLVAILDADKEGFLRSDRSLIQTIGRAARNVNGRAILYADRITGSMQRAMDETDRRREKQIAYNKEHGITPQGLNKDITDVMDLGQGSAKARKSKAEKALAEVASGYDARTVVVKDAKAVMKEIDAKEKEMYKAAQNLEFEQAGKLRDEVAELREQLKRAV</sequence>
<keyword id="KW-0067">ATP-binding</keyword>
<keyword id="KW-0963">Cytoplasm</keyword>
<keyword id="KW-0227">DNA damage</keyword>
<keyword id="KW-0228">DNA excision</keyword>
<keyword id="KW-0234">DNA repair</keyword>
<keyword id="KW-0267">Excision nuclease</keyword>
<keyword id="KW-0547">Nucleotide-binding</keyword>
<keyword id="KW-1185">Reference proteome</keyword>
<keyword id="KW-0742">SOS response</keyword>
<organism>
    <name type="scientific">Idiomarina loihiensis (strain ATCC BAA-735 / DSM 15497 / L2-TR)</name>
    <dbReference type="NCBI Taxonomy" id="283942"/>
    <lineage>
        <taxon>Bacteria</taxon>
        <taxon>Pseudomonadati</taxon>
        <taxon>Pseudomonadota</taxon>
        <taxon>Gammaproteobacteria</taxon>
        <taxon>Alteromonadales</taxon>
        <taxon>Idiomarinaceae</taxon>
        <taxon>Idiomarina</taxon>
    </lineage>
</organism>
<accession>Q5QXB8</accession>
<dbReference type="EMBL" id="AE017340">
    <property type="protein sequence ID" value="AAV82621.1"/>
    <property type="molecule type" value="Genomic_DNA"/>
</dbReference>
<dbReference type="RefSeq" id="WP_011235022.1">
    <property type="nucleotide sequence ID" value="NC_006512.1"/>
</dbReference>
<dbReference type="SMR" id="Q5QXB8"/>
<dbReference type="STRING" id="283942.IL1789"/>
<dbReference type="GeneID" id="41336971"/>
<dbReference type="KEGG" id="ilo:IL1789"/>
<dbReference type="eggNOG" id="COG0556">
    <property type="taxonomic scope" value="Bacteria"/>
</dbReference>
<dbReference type="HOGENOM" id="CLU_009621_2_1_6"/>
<dbReference type="OrthoDB" id="9806651at2"/>
<dbReference type="Proteomes" id="UP000001171">
    <property type="component" value="Chromosome"/>
</dbReference>
<dbReference type="GO" id="GO:0005737">
    <property type="term" value="C:cytoplasm"/>
    <property type="evidence" value="ECO:0007669"/>
    <property type="project" value="UniProtKB-SubCell"/>
</dbReference>
<dbReference type="GO" id="GO:0009380">
    <property type="term" value="C:excinuclease repair complex"/>
    <property type="evidence" value="ECO:0007669"/>
    <property type="project" value="InterPro"/>
</dbReference>
<dbReference type="GO" id="GO:0005524">
    <property type="term" value="F:ATP binding"/>
    <property type="evidence" value="ECO:0007669"/>
    <property type="project" value="UniProtKB-UniRule"/>
</dbReference>
<dbReference type="GO" id="GO:0016887">
    <property type="term" value="F:ATP hydrolysis activity"/>
    <property type="evidence" value="ECO:0007669"/>
    <property type="project" value="InterPro"/>
</dbReference>
<dbReference type="GO" id="GO:0003677">
    <property type="term" value="F:DNA binding"/>
    <property type="evidence" value="ECO:0007669"/>
    <property type="project" value="UniProtKB-UniRule"/>
</dbReference>
<dbReference type="GO" id="GO:0009381">
    <property type="term" value="F:excinuclease ABC activity"/>
    <property type="evidence" value="ECO:0007669"/>
    <property type="project" value="UniProtKB-UniRule"/>
</dbReference>
<dbReference type="GO" id="GO:0006289">
    <property type="term" value="P:nucleotide-excision repair"/>
    <property type="evidence" value="ECO:0007669"/>
    <property type="project" value="UniProtKB-UniRule"/>
</dbReference>
<dbReference type="GO" id="GO:0009432">
    <property type="term" value="P:SOS response"/>
    <property type="evidence" value="ECO:0007669"/>
    <property type="project" value="UniProtKB-UniRule"/>
</dbReference>
<dbReference type="CDD" id="cd17916">
    <property type="entry name" value="DEXHc_UvrB"/>
    <property type="match status" value="1"/>
</dbReference>
<dbReference type="CDD" id="cd18790">
    <property type="entry name" value="SF2_C_UvrB"/>
    <property type="match status" value="1"/>
</dbReference>
<dbReference type="FunFam" id="3.40.50.300:FF:000257">
    <property type="entry name" value="UvrABC system protein B"/>
    <property type="match status" value="1"/>
</dbReference>
<dbReference type="FunFam" id="3.40.50.300:FF:000477">
    <property type="entry name" value="UvrABC system protein B"/>
    <property type="match status" value="1"/>
</dbReference>
<dbReference type="Gene3D" id="3.40.50.300">
    <property type="entry name" value="P-loop containing nucleotide triphosphate hydrolases"/>
    <property type="match status" value="3"/>
</dbReference>
<dbReference type="Gene3D" id="4.10.860.10">
    <property type="entry name" value="UVR domain"/>
    <property type="match status" value="1"/>
</dbReference>
<dbReference type="HAMAP" id="MF_00204">
    <property type="entry name" value="UvrB"/>
    <property type="match status" value="1"/>
</dbReference>
<dbReference type="InterPro" id="IPR006935">
    <property type="entry name" value="Helicase/UvrB_N"/>
</dbReference>
<dbReference type="InterPro" id="IPR014001">
    <property type="entry name" value="Helicase_ATP-bd"/>
</dbReference>
<dbReference type="InterPro" id="IPR001650">
    <property type="entry name" value="Helicase_C-like"/>
</dbReference>
<dbReference type="InterPro" id="IPR027417">
    <property type="entry name" value="P-loop_NTPase"/>
</dbReference>
<dbReference type="InterPro" id="IPR001943">
    <property type="entry name" value="UVR_dom"/>
</dbReference>
<dbReference type="InterPro" id="IPR036876">
    <property type="entry name" value="UVR_dom_sf"/>
</dbReference>
<dbReference type="InterPro" id="IPR004807">
    <property type="entry name" value="UvrB"/>
</dbReference>
<dbReference type="InterPro" id="IPR041471">
    <property type="entry name" value="UvrB_inter"/>
</dbReference>
<dbReference type="InterPro" id="IPR024759">
    <property type="entry name" value="UvrB_YAD/RRR_dom"/>
</dbReference>
<dbReference type="NCBIfam" id="NF003673">
    <property type="entry name" value="PRK05298.1"/>
    <property type="match status" value="1"/>
</dbReference>
<dbReference type="NCBIfam" id="TIGR00631">
    <property type="entry name" value="uvrb"/>
    <property type="match status" value="1"/>
</dbReference>
<dbReference type="PANTHER" id="PTHR24029">
    <property type="entry name" value="UVRABC SYSTEM PROTEIN B"/>
    <property type="match status" value="1"/>
</dbReference>
<dbReference type="PANTHER" id="PTHR24029:SF0">
    <property type="entry name" value="UVRABC SYSTEM PROTEIN B"/>
    <property type="match status" value="1"/>
</dbReference>
<dbReference type="Pfam" id="PF00271">
    <property type="entry name" value="Helicase_C"/>
    <property type="match status" value="1"/>
</dbReference>
<dbReference type="Pfam" id="PF04851">
    <property type="entry name" value="ResIII"/>
    <property type="match status" value="1"/>
</dbReference>
<dbReference type="Pfam" id="PF02151">
    <property type="entry name" value="UVR"/>
    <property type="match status" value="1"/>
</dbReference>
<dbReference type="Pfam" id="PF12344">
    <property type="entry name" value="UvrB"/>
    <property type="match status" value="1"/>
</dbReference>
<dbReference type="Pfam" id="PF17757">
    <property type="entry name" value="UvrB_inter"/>
    <property type="match status" value="1"/>
</dbReference>
<dbReference type="SMART" id="SM00487">
    <property type="entry name" value="DEXDc"/>
    <property type="match status" value="1"/>
</dbReference>
<dbReference type="SMART" id="SM00490">
    <property type="entry name" value="HELICc"/>
    <property type="match status" value="1"/>
</dbReference>
<dbReference type="SUPFAM" id="SSF46600">
    <property type="entry name" value="C-terminal UvrC-binding domain of UvrB"/>
    <property type="match status" value="1"/>
</dbReference>
<dbReference type="SUPFAM" id="SSF52540">
    <property type="entry name" value="P-loop containing nucleoside triphosphate hydrolases"/>
    <property type="match status" value="2"/>
</dbReference>
<dbReference type="PROSITE" id="PS51192">
    <property type="entry name" value="HELICASE_ATP_BIND_1"/>
    <property type="match status" value="1"/>
</dbReference>
<dbReference type="PROSITE" id="PS51194">
    <property type="entry name" value="HELICASE_CTER"/>
    <property type="match status" value="1"/>
</dbReference>
<dbReference type="PROSITE" id="PS50151">
    <property type="entry name" value="UVR"/>
    <property type="match status" value="1"/>
</dbReference>
<protein>
    <recommendedName>
        <fullName evidence="1">UvrABC system protein B</fullName>
        <shortName evidence="1">Protein UvrB</shortName>
    </recommendedName>
    <alternativeName>
        <fullName evidence="1">Excinuclease ABC subunit B</fullName>
    </alternativeName>
</protein>
<comment type="function">
    <text evidence="1">The UvrABC repair system catalyzes the recognition and processing of DNA lesions. A damage recognition complex composed of 2 UvrA and 2 UvrB subunits scans DNA for abnormalities. Upon binding of the UvrA(2)B(2) complex to a putative damaged site, the DNA wraps around one UvrB monomer. DNA wrap is dependent on ATP binding by UvrB and probably causes local melting of the DNA helix, facilitating insertion of UvrB beta-hairpin between the DNA strands. Then UvrB probes one DNA strand for the presence of a lesion. If a lesion is found the UvrA subunits dissociate and the UvrB-DNA preincision complex is formed. This complex is subsequently bound by UvrC and the second UvrB is released. If no lesion is found, the DNA wraps around the other UvrB subunit that will check the other stand for damage.</text>
</comment>
<comment type="subunit">
    <text evidence="1">Forms a heterotetramer with UvrA during the search for lesions. Interacts with UvrC in an incision complex.</text>
</comment>
<comment type="subcellular location">
    <subcellularLocation>
        <location evidence="1">Cytoplasm</location>
    </subcellularLocation>
</comment>
<comment type="domain">
    <text evidence="1">The beta-hairpin motif is involved in DNA binding.</text>
</comment>
<comment type="similarity">
    <text evidence="1">Belongs to the UvrB family.</text>
</comment>
<reference key="1">
    <citation type="journal article" date="2004" name="Proc. Natl. Acad. Sci. U.S.A.">
        <title>Genome sequence of the deep-sea gamma-proteobacterium Idiomarina loihiensis reveals amino acid fermentation as a source of carbon and energy.</title>
        <authorList>
            <person name="Hou S."/>
            <person name="Saw J.H."/>
            <person name="Lee K.S."/>
            <person name="Freitas T.A."/>
            <person name="Belisle C."/>
            <person name="Kawarabayasi Y."/>
            <person name="Donachie S.P."/>
            <person name="Pikina A."/>
            <person name="Galperin M.Y."/>
            <person name="Koonin E.V."/>
            <person name="Makarova K.S."/>
            <person name="Omelchenko M.V."/>
            <person name="Sorokin A."/>
            <person name="Wolf Y.I."/>
            <person name="Li Q.X."/>
            <person name="Keum Y.S."/>
            <person name="Campbell S."/>
            <person name="Denery J."/>
            <person name="Aizawa S."/>
            <person name="Shibata S."/>
            <person name="Malahoff A."/>
            <person name="Alam M."/>
        </authorList>
    </citation>
    <scope>NUCLEOTIDE SEQUENCE [LARGE SCALE GENOMIC DNA]</scope>
    <source>
        <strain>ATCC BAA-735 / DSM 15497 / L2-TR</strain>
    </source>
</reference>
<proteinExistence type="inferred from homology"/>
<evidence type="ECO:0000255" key="1">
    <source>
        <dbReference type="HAMAP-Rule" id="MF_00204"/>
    </source>
</evidence>
<gene>
    <name evidence="1" type="primary">uvrB</name>
    <name type="ordered locus">IL1789</name>
</gene>